<proteinExistence type="inferred from homology"/>
<protein>
    <recommendedName>
        <fullName evidence="1">Serine/threonine transporter SstT</fullName>
    </recommendedName>
    <alternativeName>
        <fullName evidence="1">Na(+)/serine-threonine symporter</fullName>
    </alternativeName>
</protein>
<organism>
    <name type="scientific">Streptococcus equi subsp. zooepidemicus (strain H70)</name>
    <dbReference type="NCBI Taxonomy" id="553483"/>
    <lineage>
        <taxon>Bacteria</taxon>
        <taxon>Bacillati</taxon>
        <taxon>Bacillota</taxon>
        <taxon>Bacilli</taxon>
        <taxon>Lactobacillales</taxon>
        <taxon>Streptococcaceae</taxon>
        <taxon>Streptococcus</taxon>
    </lineage>
</organism>
<accession>C0MG44</accession>
<reference key="1">
    <citation type="journal article" date="2009" name="PLoS Pathog.">
        <title>Genomic evidence for the evolution of Streptococcus equi: host restriction, increased virulence, and genetic exchange with human pathogens.</title>
        <authorList>
            <person name="Holden M.T.G."/>
            <person name="Heather Z."/>
            <person name="Paillot R."/>
            <person name="Steward K.F."/>
            <person name="Webb K."/>
            <person name="Ainslie F."/>
            <person name="Jourdan T."/>
            <person name="Bason N.C."/>
            <person name="Holroyd N.E."/>
            <person name="Mungall K."/>
            <person name="Quail M.A."/>
            <person name="Sanders M."/>
            <person name="Simmonds M."/>
            <person name="Willey D."/>
            <person name="Brooks K."/>
            <person name="Aanensen D.M."/>
            <person name="Spratt B.G."/>
            <person name="Jolley K.A."/>
            <person name="Maiden M.C.J."/>
            <person name="Kehoe M."/>
            <person name="Chanter N."/>
            <person name="Bentley S.D."/>
            <person name="Robinson C."/>
            <person name="Maskell D.J."/>
            <person name="Parkhill J."/>
            <person name="Waller A.S."/>
        </authorList>
    </citation>
    <scope>NUCLEOTIDE SEQUENCE [LARGE SCALE GENOMIC DNA]</scope>
    <source>
        <strain>H70</strain>
    </source>
</reference>
<evidence type="ECO:0000255" key="1">
    <source>
        <dbReference type="HAMAP-Rule" id="MF_01582"/>
    </source>
</evidence>
<keyword id="KW-0029">Amino-acid transport</keyword>
<keyword id="KW-1003">Cell membrane</keyword>
<keyword id="KW-0472">Membrane</keyword>
<keyword id="KW-0769">Symport</keyword>
<keyword id="KW-0812">Transmembrane</keyword>
<keyword id="KW-1133">Transmembrane helix</keyword>
<keyword id="KW-0813">Transport</keyword>
<dbReference type="EMBL" id="FM204884">
    <property type="protein sequence ID" value="CAW98098.1"/>
    <property type="molecule type" value="Genomic_DNA"/>
</dbReference>
<dbReference type="SMR" id="C0MG44"/>
<dbReference type="KEGG" id="seq:SZO_03000"/>
<dbReference type="eggNOG" id="COG3633">
    <property type="taxonomic scope" value="Bacteria"/>
</dbReference>
<dbReference type="HOGENOM" id="CLU_044581_0_0_9"/>
<dbReference type="Proteomes" id="UP000001368">
    <property type="component" value="Chromosome"/>
</dbReference>
<dbReference type="GO" id="GO:0005886">
    <property type="term" value="C:plasma membrane"/>
    <property type="evidence" value="ECO:0007669"/>
    <property type="project" value="UniProtKB-SubCell"/>
</dbReference>
<dbReference type="GO" id="GO:0005295">
    <property type="term" value="F:neutral L-amino acid:sodium symporter activity"/>
    <property type="evidence" value="ECO:0007669"/>
    <property type="project" value="TreeGrafter"/>
</dbReference>
<dbReference type="GO" id="GO:0032329">
    <property type="term" value="P:serine transport"/>
    <property type="evidence" value="ECO:0007669"/>
    <property type="project" value="InterPro"/>
</dbReference>
<dbReference type="GO" id="GO:0015826">
    <property type="term" value="P:threonine transport"/>
    <property type="evidence" value="ECO:0007669"/>
    <property type="project" value="InterPro"/>
</dbReference>
<dbReference type="FunFam" id="1.10.3860.10:FF:000003">
    <property type="entry name" value="Serine/threonine transporter sstT"/>
    <property type="match status" value="1"/>
</dbReference>
<dbReference type="Gene3D" id="1.10.3860.10">
    <property type="entry name" value="Sodium:dicarboxylate symporter"/>
    <property type="match status" value="1"/>
</dbReference>
<dbReference type="HAMAP" id="MF_01582">
    <property type="entry name" value="Ser_Thr_transp_SstT"/>
    <property type="match status" value="1"/>
</dbReference>
<dbReference type="InterPro" id="IPR001991">
    <property type="entry name" value="Na-dicarboxylate_symporter"/>
</dbReference>
<dbReference type="InterPro" id="IPR036458">
    <property type="entry name" value="Na:dicarbo_symporter_sf"/>
</dbReference>
<dbReference type="InterPro" id="IPR023025">
    <property type="entry name" value="Ser_Thr_transp_SstT"/>
</dbReference>
<dbReference type="NCBIfam" id="NF010151">
    <property type="entry name" value="PRK13628.1"/>
    <property type="match status" value="1"/>
</dbReference>
<dbReference type="PANTHER" id="PTHR42865">
    <property type="entry name" value="PROTON/GLUTAMATE-ASPARTATE SYMPORTER"/>
    <property type="match status" value="1"/>
</dbReference>
<dbReference type="PANTHER" id="PTHR42865:SF8">
    <property type="entry name" value="SERINE_THREONINE TRANSPORTER SSTT"/>
    <property type="match status" value="1"/>
</dbReference>
<dbReference type="Pfam" id="PF00375">
    <property type="entry name" value="SDF"/>
    <property type="match status" value="1"/>
</dbReference>
<dbReference type="PRINTS" id="PR00173">
    <property type="entry name" value="EDTRNSPORT"/>
</dbReference>
<dbReference type="SUPFAM" id="SSF118215">
    <property type="entry name" value="Proton glutamate symport protein"/>
    <property type="match status" value="1"/>
</dbReference>
<feature type="chain" id="PRO_1000215622" description="Serine/threonine transporter SstT">
    <location>
        <begin position="1"/>
        <end position="404"/>
    </location>
</feature>
<feature type="transmembrane region" description="Helical" evidence="1">
    <location>
        <begin position="17"/>
        <end position="37"/>
    </location>
</feature>
<feature type="transmembrane region" description="Helical" evidence="1">
    <location>
        <begin position="44"/>
        <end position="64"/>
    </location>
</feature>
<feature type="transmembrane region" description="Helical" evidence="1">
    <location>
        <begin position="75"/>
        <end position="95"/>
    </location>
</feature>
<feature type="transmembrane region" description="Helical" evidence="1">
    <location>
        <begin position="138"/>
        <end position="158"/>
    </location>
</feature>
<feature type="transmembrane region" description="Helical" evidence="1">
    <location>
        <begin position="179"/>
        <end position="199"/>
    </location>
</feature>
<feature type="transmembrane region" description="Helical" evidence="1">
    <location>
        <begin position="212"/>
        <end position="232"/>
    </location>
</feature>
<feature type="transmembrane region" description="Helical" evidence="1">
    <location>
        <begin position="287"/>
        <end position="307"/>
    </location>
</feature>
<feature type="transmembrane region" description="Helical" evidence="1">
    <location>
        <begin position="319"/>
        <end position="339"/>
    </location>
</feature>
<feature type="transmembrane region" description="Helical" evidence="1">
    <location>
        <begin position="354"/>
        <end position="374"/>
    </location>
</feature>
<comment type="function">
    <text evidence="1">Involved in the import of serine and threonine into the cell, with the concomitant import of sodium (symport system).</text>
</comment>
<comment type="catalytic activity">
    <reaction evidence="1">
        <text>L-serine(in) + Na(+)(in) = L-serine(out) + Na(+)(out)</text>
        <dbReference type="Rhea" id="RHEA:29575"/>
        <dbReference type="ChEBI" id="CHEBI:29101"/>
        <dbReference type="ChEBI" id="CHEBI:33384"/>
    </reaction>
    <physiologicalReaction direction="right-to-left" evidence="1">
        <dbReference type="Rhea" id="RHEA:29577"/>
    </physiologicalReaction>
</comment>
<comment type="catalytic activity">
    <reaction evidence="1">
        <text>L-threonine(in) + Na(+)(in) = L-threonine(out) + Na(+)(out)</text>
        <dbReference type="Rhea" id="RHEA:69999"/>
        <dbReference type="ChEBI" id="CHEBI:29101"/>
        <dbReference type="ChEBI" id="CHEBI:57926"/>
    </reaction>
    <physiologicalReaction direction="right-to-left" evidence="1">
        <dbReference type="Rhea" id="RHEA:70001"/>
    </physiologicalReaction>
</comment>
<comment type="subcellular location">
    <subcellularLocation>
        <location evidence="1">Cell membrane</location>
        <topology evidence="1">Multi-pass membrane protein</topology>
    </subcellularLocation>
</comment>
<comment type="similarity">
    <text evidence="1">Belongs to the dicarboxylate/amino acid:cation symporter (DAACS) (TC 2.A.23) family.</text>
</comment>
<gene>
    <name evidence="1" type="primary">sstT</name>
    <name type="ordered locus">SZO_03000</name>
</gene>
<name>SSTT_STRS7</name>
<sequence length="404" mass="42596">MKRIRDLWVRTNLIKKIGIGVVIGLLLGILLPDVTAIGILGQLFVGALKAIAPLLVFALVVQAISHQRSGQQTNMTLIIVLYLLGTFLAALVAVIANYLFPLTLTLNTSVNTELSPPQGIVQVFQTLLLKLVDNPINALATANYIGVLAWALIFGLALKSVPSDFKHLIKTAADVTSQIVVWIINVAPIGIMGLVFSTVSENGISILSDYALLILVLVGTMLFVALVVNPLLAFVLTHQNPYPLVFRCLKDSGLTAFFTRSSAANIPVNLQLCEDLGLSQATYLVSIPLGAMINMGGAAITINVLTLAAVNTFGIQIDFLTALLLSVVAAISACGASGVTGGSLLLIPVACSLFGISSDLAMQVVGVGFIVGVIQDSCETALNSSTDVLFTAIAEKAFWKQKKA</sequence>